<organism>
    <name type="scientific">Serratia marcescens</name>
    <dbReference type="NCBI Taxonomy" id="615"/>
    <lineage>
        <taxon>Bacteria</taxon>
        <taxon>Pseudomonadati</taxon>
        <taxon>Pseudomonadota</taxon>
        <taxon>Gammaproteobacteria</taxon>
        <taxon>Enterobacterales</taxon>
        <taxon>Yersiniaceae</taxon>
        <taxon>Serratia</taxon>
    </lineage>
</organism>
<name>CH60_SERMA</name>
<accession>O66206</accession>
<feature type="chain" id="PRO_0000063525" description="Chaperonin GroEL">
    <location>
        <begin position="1"/>
        <end position="540" status="greater than"/>
    </location>
</feature>
<feature type="binding site" evidence="1">
    <location>
        <begin position="30"/>
        <end position="33"/>
    </location>
    <ligand>
        <name>ATP</name>
        <dbReference type="ChEBI" id="CHEBI:30616"/>
    </ligand>
</feature>
<feature type="binding site" evidence="1">
    <location>
        <position position="51"/>
    </location>
    <ligand>
        <name>ATP</name>
        <dbReference type="ChEBI" id="CHEBI:30616"/>
    </ligand>
</feature>
<feature type="binding site" evidence="1">
    <location>
        <begin position="87"/>
        <end position="91"/>
    </location>
    <ligand>
        <name>ATP</name>
        <dbReference type="ChEBI" id="CHEBI:30616"/>
    </ligand>
</feature>
<feature type="binding site" evidence="1">
    <location>
        <position position="415"/>
    </location>
    <ligand>
        <name>ATP</name>
        <dbReference type="ChEBI" id="CHEBI:30616"/>
    </ligand>
</feature>
<feature type="binding site" evidence="1">
    <location>
        <position position="495"/>
    </location>
    <ligand>
        <name>ATP</name>
        <dbReference type="ChEBI" id="CHEBI:30616"/>
    </ligand>
</feature>
<feature type="non-terminal residue">
    <location>
        <position position="540"/>
    </location>
</feature>
<protein>
    <recommendedName>
        <fullName evidence="1">Chaperonin GroEL</fullName>
        <ecNumber evidence="1">5.6.1.7</ecNumber>
    </recommendedName>
    <alternativeName>
        <fullName evidence="1">60 kDa chaperonin</fullName>
    </alternativeName>
    <alternativeName>
        <fullName evidence="1">Chaperonin-60</fullName>
        <shortName evidence="1">Cpn60</shortName>
    </alternativeName>
</protein>
<evidence type="ECO:0000255" key="1">
    <source>
        <dbReference type="HAMAP-Rule" id="MF_00600"/>
    </source>
</evidence>
<comment type="function">
    <text evidence="1">Together with its co-chaperonin GroES, plays an essential role in assisting protein folding. The GroEL-GroES system forms a nano-cage that allows encapsulation of the non-native substrate proteins and provides a physical environment optimized to promote and accelerate protein folding.</text>
</comment>
<comment type="catalytic activity">
    <reaction evidence="1">
        <text>ATP + H2O + a folded polypeptide = ADP + phosphate + an unfolded polypeptide.</text>
        <dbReference type="EC" id="5.6.1.7"/>
    </reaction>
</comment>
<comment type="subunit">
    <text evidence="1">Forms a cylinder of 14 subunits composed of two heptameric rings stacked back-to-back. Interacts with the co-chaperonin GroES.</text>
</comment>
<comment type="subcellular location">
    <subcellularLocation>
        <location evidence="1">Cytoplasm</location>
    </subcellularLocation>
</comment>
<comment type="similarity">
    <text evidence="1">Belongs to the chaperonin (HSP60) family.</text>
</comment>
<dbReference type="EC" id="5.6.1.7" evidence="1"/>
<dbReference type="EMBL" id="AB008145">
    <property type="protein sequence ID" value="BAA25223.1"/>
    <property type="molecule type" value="Genomic_DNA"/>
</dbReference>
<dbReference type="STRING" id="273526.SMDB11_4457"/>
<dbReference type="GO" id="GO:0005737">
    <property type="term" value="C:cytoplasm"/>
    <property type="evidence" value="ECO:0007669"/>
    <property type="project" value="UniProtKB-SubCell"/>
</dbReference>
<dbReference type="GO" id="GO:0005524">
    <property type="term" value="F:ATP binding"/>
    <property type="evidence" value="ECO:0007669"/>
    <property type="project" value="UniProtKB-KW"/>
</dbReference>
<dbReference type="GO" id="GO:0140662">
    <property type="term" value="F:ATP-dependent protein folding chaperone"/>
    <property type="evidence" value="ECO:0007669"/>
    <property type="project" value="InterPro"/>
</dbReference>
<dbReference type="GO" id="GO:0016853">
    <property type="term" value="F:isomerase activity"/>
    <property type="evidence" value="ECO:0007669"/>
    <property type="project" value="UniProtKB-KW"/>
</dbReference>
<dbReference type="GO" id="GO:0042026">
    <property type="term" value="P:protein refolding"/>
    <property type="evidence" value="ECO:0007669"/>
    <property type="project" value="InterPro"/>
</dbReference>
<dbReference type="CDD" id="cd03344">
    <property type="entry name" value="GroEL"/>
    <property type="match status" value="1"/>
</dbReference>
<dbReference type="FunFam" id="1.10.560.10:FF:000001">
    <property type="entry name" value="60 kDa chaperonin"/>
    <property type="match status" value="1"/>
</dbReference>
<dbReference type="FunFam" id="3.50.7.10:FF:000001">
    <property type="entry name" value="60 kDa chaperonin"/>
    <property type="match status" value="1"/>
</dbReference>
<dbReference type="Gene3D" id="3.50.7.10">
    <property type="entry name" value="GroEL"/>
    <property type="match status" value="1"/>
</dbReference>
<dbReference type="Gene3D" id="1.10.560.10">
    <property type="entry name" value="GroEL-like equatorial domain"/>
    <property type="match status" value="1"/>
</dbReference>
<dbReference type="Gene3D" id="3.30.260.10">
    <property type="entry name" value="TCP-1-like chaperonin intermediate domain"/>
    <property type="match status" value="1"/>
</dbReference>
<dbReference type="HAMAP" id="MF_00600">
    <property type="entry name" value="CH60"/>
    <property type="match status" value="1"/>
</dbReference>
<dbReference type="InterPro" id="IPR018370">
    <property type="entry name" value="Chaperonin_Cpn60_CS"/>
</dbReference>
<dbReference type="InterPro" id="IPR001844">
    <property type="entry name" value="Cpn60/GroEL"/>
</dbReference>
<dbReference type="InterPro" id="IPR002423">
    <property type="entry name" value="Cpn60/GroEL/TCP-1"/>
</dbReference>
<dbReference type="InterPro" id="IPR027409">
    <property type="entry name" value="GroEL-like_apical_dom_sf"/>
</dbReference>
<dbReference type="InterPro" id="IPR027413">
    <property type="entry name" value="GROEL-like_equatorial_sf"/>
</dbReference>
<dbReference type="InterPro" id="IPR027410">
    <property type="entry name" value="TCP-1-like_intermed_sf"/>
</dbReference>
<dbReference type="NCBIfam" id="TIGR02348">
    <property type="entry name" value="GroEL"/>
    <property type="match status" value="1"/>
</dbReference>
<dbReference type="NCBIfam" id="NF000592">
    <property type="entry name" value="PRK00013.1"/>
    <property type="match status" value="1"/>
</dbReference>
<dbReference type="NCBIfam" id="NF009487">
    <property type="entry name" value="PRK12849.1"/>
    <property type="match status" value="1"/>
</dbReference>
<dbReference type="NCBIfam" id="NF009488">
    <property type="entry name" value="PRK12850.1"/>
    <property type="match status" value="1"/>
</dbReference>
<dbReference type="NCBIfam" id="NF009489">
    <property type="entry name" value="PRK12851.1"/>
    <property type="match status" value="1"/>
</dbReference>
<dbReference type="PANTHER" id="PTHR45633">
    <property type="entry name" value="60 KDA HEAT SHOCK PROTEIN, MITOCHONDRIAL"/>
    <property type="match status" value="1"/>
</dbReference>
<dbReference type="Pfam" id="PF00118">
    <property type="entry name" value="Cpn60_TCP1"/>
    <property type="match status" value="1"/>
</dbReference>
<dbReference type="PRINTS" id="PR00298">
    <property type="entry name" value="CHAPERONIN60"/>
</dbReference>
<dbReference type="SUPFAM" id="SSF52029">
    <property type="entry name" value="GroEL apical domain-like"/>
    <property type="match status" value="1"/>
</dbReference>
<dbReference type="SUPFAM" id="SSF48592">
    <property type="entry name" value="GroEL equatorial domain-like"/>
    <property type="match status" value="1"/>
</dbReference>
<dbReference type="SUPFAM" id="SSF54849">
    <property type="entry name" value="GroEL-intermediate domain like"/>
    <property type="match status" value="1"/>
</dbReference>
<dbReference type="PROSITE" id="PS00296">
    <property type="entry name" value="CHAPERONINS_CPN60"/>
    <property type="match status" value="1"/>
</dbReference>
<gene>
    <name evidence="1" type="primary">groEL</name>
    <name evidence="1" type="synonym">groL</name>
    <name type="synonym">mopA</name>
</gene>
<reference key="1">
    <citation type="journal article" date="1997" name="J. Gen. Appl. Microbiol.">
        <title>Phylogenetical relationship based on groE genes among phenotypically related Enterobacter, Pantoea, Klebsiella, Serratia, and Erwinia species.</title>
        <authorList>
            <person name="Harada H."/>
            <person name="Ishikawa H."/>
        </authorList>
    </citation>
    <scope>NUCLEOTIDE SEQUENCE [GENOMIC DNA]</scope>
    <source>
        <strain>ATCC 13880 / DSM 30121 / JCM 1239 / NBRC 102204 / NCIMB 9155 / NCTC 10211</strain>
    </source>
</reference>
<keyword id="KW-0067">ATP-binding</keyword>
<keyword id="KW-0143">Chaperone</keyword>
<keyword id="KW-0963">Cytoplasm</keyword>
<keyword id="KW-0413">Isomerase</keyword>
<keyword id="KW-0547">Nucleotide-binding</keyword>
<proteinExistence type="inferred from homology"/>
<sequence>MAAKDVKFGNDARVKMLRGVNVLADAVKVTLGPKGRNVVLDKSFGAPTITKDGVSVAREIELEDKFENMGAQMVKEVASKANDAAGDGTTTATVLAQSIITEGLKAVAAGMNPMDLKRGIDKAVVAAVEELKKLSVPCSDSKAIAQVGTISANSDETVGKLIAEAMEKVGKEGVITVEEGTGLQDELDVVEGMQFDRGYLSPYFINKPETGSVELESPFILLADKKISNIREMLPVLEAVAKAGKPLLIIAEDVEGEALATLVVNTMRGIVKVAAVKAPGFGDRRKDMLQDIATLTAGTVISEEIGLELEKATLEDLGQAKRVVINKDTTIIIDGVGDEATIQGRVAQIRQQIEEATSDYDREKLQERVAKLAGGVAVIKVGAATEVEMKEKKARVEDALHATRAAVEEGVVAGGGVALIRVAGKIAALKGDNEDQNVGIKVALRAMEAPLRQIVVNAGEEASVIANQVKAGEGSYGYNAYSEEYGDMIAMGILDPTKVTRSALQYAASVAGLMITTECMVTDLPKADAPDLGAXGGMGG</sequence>